<keyword id="KW-0028">Amino-acid biosynthesis</keyword>
<keyword id="KW-0413">Isomerase</keyword>
<keyword id="KW-0486">Methionine biosynthesis</keyword>
<keyword id="KW-1185">Reference proteome</keyword>
<accession>B2J5P6</accession>
<sequence>MTLSTNHVYPVIWHNGAVSLIDQTRLPNEYTFVEIHRSEDMARAIKTMIVRGAPAIGVAAAYGMYLGAREIETSDRHEFLQNLDKVAQLLGSTRPTAVNLFWAISRMMKVAKETLGTVEDIKQTLFQTAQAINVEDLQTCQAIGDNGLTVLPASPEKLTLLTHCNAGALATAGYGTALGVVRSAWREGRLERLFADETRPRLQGAKLTAWECVQEGIPVTLITDNMAAHCMKQGLIHAVVVGADRIAANGDTANKIGTYSVAIAAKAHNIPFFVAAPLSTVDFELADGSKIPIEERDPTEIYQVGDTILTPEGVDFYNPAFDVTPAELITAIITENGAIAPGELVKLQLKQLV</sequence>
<gene>
    <name evidence="1" type="primary">mtnA</name>
    <name type="ordered locus">Npun_F5471</name>
</gene>
<dbReference type="EC" id="5.3.1.23" evidence="1"/>
<dbReference type="EMBL" id="CP001037">
    <property type="protein sequence ID" value="ACC83778.1"/>
    <property type="molecule type" value="Genomic_DNA"/>
</dbReference>
<dbReference type="RefSeq" id="WP_012411724.1">
    <property type="nucleotide sequence ID" value="NC_010628.1"/>
</dbReference>
<dbReference type="SMR" id="B2J5P6"/>
<dbReference type="STRING" id="63737.Npun_F5471"/>
<dbReference type="EnsemblBacteria" id="ACC83778">
    <property type="protein sequence ID" value="ACC83778"/>
    <property type="gene ID" value="Npun_F5471"/>
</dbReference>
<dbReference type="KEGG" id="npu:Npun_F5471"/>
<dbReference type="eggNOG" id="COG0182">
    <property type="taxonomic scope" value="Bacteria"/>
</dbReference>
<dbReference type="HOGENOM" id="CLU_016218_1_2_3"/>
<dbReference type="OrthoDB" id="9803436at2"/>
<dbReference type="PhylomeDB" id="B2J5P6"/>
<dbReference type="UniPathway" id="UPA00904">
    <property type="reaction ID" value="UER00874"/>
</dbReference>
<dbReference type="Proteomes" id="UP000001191">
    <property type="component" value="Chromosome"/>
</dbReference>
<dbReference type="GO" id="GO:0046523">
    <property type="term" value="F:S-methyl-5-thioribose-1-phosphate isomerase activity"/>
    <property type="evidence" value="ECO:0007669"/>
    <property type="project" value="UniProtKB-UniRule"/>
</dbReference>
<dbReference type="GO" id="GO:0019509">
    <property type="term" value="P:L-methionine salvage from methylthioadenosine"/>
    <property type="evidence" value="ECO:0007669"/>
    <property type="project" value="UniProtKB-UniRule"/>
</dbReference>
<dbReference type="FunFam" id="1.20.120.420:FF:000003">
    <property type="entry name" value="Methylthioribose-1-phosphate isomerase"/>
    <property type="match status" value="1"/>
</dbReference>
<dbReference type="FunFam" id="3.40.50.10470:FF:000006">
    <property type="entry name" value="Methylthioribose-1-phosphate isomerase"/>
    <property type="match status" value="1"/>
</dbReference>
<dbReference type="Gene3D" id="1.20.120.420">
    <property type="entry name" value="translation initiation factor eif-2b, domain 1"/>
    <property type="match status" value="1"/>
</dbReference>
<dbReference type="Gene3D" id="3.40.50.10470">
    <property type="entry name" value="Translation initiation factor eif-2b, domain 2"/>
    <property type="match status" value="1"/>
</dbReference>
<dbReference type="HAMAP" id="MF_01678">
    <property type="entry name" value="Salvage_MtnA"/>
    <property type="match status" value="1"/>
</dbReference>
<dbReference type="InterPro" id="IPR000649">
    <property type="entry name" value="IF-2B-related"/>
</dbReference>
<dbReference type="InterPro" id="IPR005251">
    <property type="entry name" value="IF-M1Pi"/>
</dbReference>
<dbReference type="InterPro" id="IPR042529">
    <property type="entry name" value="IF_2B-like_C"/>
</dbReference>
<dbReference type="InterPro" id="IPR011559">
    <property type="entry name" value="Initiation_fac_2B_a/b/d"/>
</dbReference>
<dbReference type="InterPro" id="IPR027363">
    <property type="entry name" value="M1Pi_N"/>
</dbReference>
<dbReference type="InterPro" id="IPR037171">
    <property type="entry name" value="NagB/RpiA_transferase-like"/>
</dbReference>
<dbReference type="NCBIfam" id="TIGR00524">
    <property type="entry name" value="eIF-2B_rel"/>
    <property type="match status" value="1"/>
</dbReference>
<dbReference type="NCBIfam" id="NF004326">
    <property type="entry name" value="PRK05720.1"/>
    <property type="match status" value="1"/>
</dbReference>
<dbReference type="NCBIfam" id="TIGR00512">
    <property type="entry name" value="salvage_mtnA"/>
    <property type="match status" value="1"/>
</dbReference>
<dbReference type="PANTHER" id="PTHR43475">
    <property type="entry name" value="METHYLTHIORIBOSE-1-PHOSPHATE ISOMERASE"/>
    <property type="match status" value="1"/>
</dbReference>
<dbReference type="PANTHER" id="PTHR43475:SF1">
    <property type="entry name" value="METHYLTHIORIBOSE-1-PHOSPHATE ISOMERASE"/>
    <property type="match status" value="1"/>
</dbReference>
<dbReference type="Pfam" id="PF01008">
    <property type="entry name" value="IF-2B"/>
    <property type="match status" value="1"/>
</dbReference>
<dbReference type="SUPFAM" id="SSF100950">
    <property type="entry name" value="NagB/RpiA/CoA transferase-like"/>
    <property type="match status" value="1"/>
</dbReference>
<reference key="1">
    <citation type="journal article" date="2013" name="Plant Physiol.">
        <title>A Nostoc punctiforme Sugar Transporter Necessary to Establish a Cyanobacterium-Plant Symbiosis.</title>
        <authorList>
            <person name="Ekman M."/>
            <person name="Picossi S."/>
            <person name="Campbell E.L."/>
            <person name="Meeks J.C."/>
            <person name="Flores E."/>
        </authorList>
    </citation>
    <scope>NUCLEOTIDE SEQUENCE [LARGE SCALE GENOMIC DNA]</scope>
    <source>
        <strain>ATCC 29133 / PCC 73102</strain>
    </source>
</reference>
<name>MTNA_NOSP7</name>
<feature type="chain" id="PRO_0000357212" description="Methylthioribose-1-phosphate isomerase">
    <location>
        <begin position="1"/>
        <end position="353"/>
    </location>
</feature>
<feature type="active site" description="Proton donor" evidence="1">
    <location>
        <position position="244"/>
    </location>
</feature>
<feature type="binding site" evidence="1">
    <location>
        <begin position="51"/>
        <end position="53"/>
    </location>
    <ligand>
        <name>substrate</name>
    </ligand>
</feature>
<feature type="binding site" evidence="1">
    <location>
        <position position="94"/>
    </location>
    <ligand>
        <name>substrate</name>
    </ligand>
</feature>
<feature type="binding site" evidence="1">
    <location>
        <position position="203"/>
    </location>
    <ligand>
        <name>substrate</name>
    </ligand>
</feature>
<feature type="binding site" evidence="1">
    <location>
        <begin position="254"/>
        <end position="255"/>
    </location>
    <ligand>
        <name>substrate</name>
    </ligand>
</feature>
<feature type="site" description="Transition state stabilizer" evidence="1">
    <location>
        <position position="164"/>
    </location>
</feature>
<organism>
    <name type="scientific">Nostoc punctiforme (strain ATCC 29133 / PCC 73102)</name>
    <dbReference type="NCBI Taxonomy" id="63737"/>
    <lineage>
        <taxon>Bacteria</taxon>
        <taxon>Bacillati</taxon>
        <taxon>Cyanobacteriota</taxon>
        <taxon>Cyanophyceae</taxon>
        <taxon>Nostocales</taxon>
        <taxon>Nostocaceae</taxon>
        <taxon>Nostoc</taxon>
    </lineage>
</organism>
<proteinExistence type="inferred from homology"/>
<comment type="function">
    <text evidence="1">Catalyzes the interconversion of methylthioribose-1-phosphate (MTR-1-P) into methylthioribulose-1-phosphate (MTRu-1-P).</text>
</comment>
<comment type="catalytic activity">
    <reaction evidence="1">
        <text>5-(methylsulfanyl)-alpha-D-ribose 1-phosphate = 5-(methylsulfanyl)-D-ribulose 1-phosphate</text>
        <dbReference type="Rhea" id="RHEA:19989"/>
        <dbReference type="ChEBI" id="CHEBI:58533"/>
        <dbReference type="ChEBI" id="CHEBI:58548"/>
        <dbReference type="EC" id="5.3.1.23"/>
    </reaction>
</comment>
<comment type="pathway">
    <text evidence="1">Amino-acid biosynthesis; L-methionine biosynthesis via salvage pathway; L-methionine from S-methyl-5-thio-alpha-D-ribose 1-phosphate: step 1/6.</text>
</comment>
<comment type="similarity">
    <text evidence="2">Belongs to the eIF-2B alpha/beta/delta subunits family. MtnA subfamily.</text>
</comment>
<evidence type="ECO:0000255" key="1">
    <source>
        <dbReference type="HAMAP-Rule" id="MF_01678"/>
    </source>
</evidence>
<evidence type="ECO:0000305" key="2"/>
<protein>
    <recommendedName>
        <fullName evidence="1">Methylthioribose-1-phosphate isomerase</fullName>
        <shortName evidence="1">M1Pi</shortName>
        <shortName evidence="1">MTR-1-P isomerase</shortName>
        <ecNumber evidence="1">5.3.1.23</ecNumber>
    </recommendedName>
    <alternativeName>
        <fullName evidence="1">S-methyl-5-thioribose-1-phosphate isomerase</fullName>
    </alternativeName>
</protein>